<evidence type="ECO:0000255" key="1">
    <source>
        <dbReference type="HAMAP-Rule" id="MF_00457"/>
    </source>
</evidence>
<feature type="chain" id="PRO_1000197817" description="UPF0173 metal-dependent hydrolase Sca_1312">
    <location>
        <begin position="1"/>
        <end position="230"/>
    </location>
</feature>
<accession>B9DNA2</accession>
<gene>
    <name type="ordered locus">Sca_1312</name>
</gene>
<name>Y1312_STACT</name>
<dbReference type="EMBL" id="AM295250">
    <property type="protein sequence ID" value="CAL28217.1"/>
    <property type="molecule type" value="Genomic_DNA"/>
</dbReference>
<dbReference type="RefSeq" id="WP_015900557.1">
    <property type="nucleotide sequence ID" value="NC_012121.1"/>
</dbReference>
<dbReference type="SMR" id="B9DNA2"/>
<dbReference type="GeneID" id="93793734"/>
<dbReference type="KEGG" id="sca:SCA_1312"/>
<dbReference type="eggNOG" id="COG2220">
    <property type="taxonomic scope" value="Bacteria"/>
</dbReference>
<dbReference type="HOGENOM" id="CLU_070010_4_1_9"/>
<dbReference type="OrthoDB" id="9789133at2"/>
<dbReference type="BioCyc" id="SCAR396513:SCA_RS06535-MONOMER"/>
<dbReference type="Proteomes" id="UP000000444">
    <property type="component" value="Chromosome"/>
</dbReference>
<dbReference type="GO" id="GO:0016787">
    <property type="term" value="F:hydrolase activity"/>
    <property type="evidence" value="ECO:0007669"/>
    <property type="project" value="UniProtKB-UniRule"/>
</dbReference>
<dbReference type="Gene3D" id="3.60.15.10">
    <property type="entry name" value="Ribonuclease Z/Hydroxyacylglutathione hydrolase-like"/>
    <property type="match status" value="1"/>
</dbReference>
<dbReference type="HAMAP" id="MF_00457">
    <property type="entry name" value="UPF0173"/>
    <property type="match status" value="1"/>
</dbReference>
<dbReference type="InterPro" id="IPR001279">
    <property type="entry name" value="Metallo-B-lactamas"/>
</dbReference>
<dbReference type="InterPro" id="IPR036866">
    <property type="entry name" value="RibonucZ/Hydroxyglut_hydro"/>
</dbReference>
<dbReference type="InterPro" id="IPR022877">
    <property type="entry name" value="UPF0173"/>
</dbReference>
<dbReference type="InterPro" id="IPR050114">
    <property type="entry name" value="UPF0173_UPF0282_UlaG_hydrolase"/>
</dbReference>
<dbReference type="NCBIfam" id="NF001911">
    <property type="entry name" value="PRK00685.1"/>
    <property type="match status" value="1"/>
</dbReference>
<dbReference type="PANTHER" id="PTHR43546:SF3">
    <property type="entry name" value="UPF0173 METAL-DEPENDENT HYDROLASE MJ1163"/>
    <property type="match status" value="1"/>
</dbReference>
<dbReference type="PANTHER" id="PTHR43546">
    <property type="entry name" value="UPF0173 METAL-DEPENDENT HYDROLASE MJ1163-RELATED"/>
    <property type="match status" value="1"/>
</dbReference>
<dbReference type="Pfam" id="PF12706">
    <property type="entry name" value="Lactamase_B_2"/>
    <property type="match status" value="1"/>
</dbReference>
<dbReference type="SMART" id="SM00849">
    <property type="entry name" value="Lactamase_B"/>
    <property type="match status" value="1"/>
</dbReference>
<dbReference type="SUPFAM" id="SSF56281">
    <property type="entry name" value="Metallo-hydrolase/oxidoreductase"/>
    <property type="match status" value="1"/>
</dbReference>
<proteinExistence type="inferred from homology"/>
<organism>
    <name type="scientific">Staphylococcus carnosus (strain TM300)</name>
    <dbReference type="NCBI Taxonomy" id="396513"/>
    <lineage>
        <taxon>Bacteria</taxon>
        <taxon>Bacillati</taxon>
        <taxon>Bacillota</taxon>
        <taxon>Bacilli</taxon>
        <taxon>Bacillales</taxon>
        <taxon>Staphylococcaceae</taxon>
        <taxon>Staphylococcus</taxon>
    </lineage>
</organism>
<protein>
    <recommendedName>
        <fullName evidence="1">UPF0173 metal-dependent hydrolase Sca_1312</fullName>
    </recommendedName>
</protein>
<sequence>MKLSFHGQSTIYFEANGKKVIVDPFITGNELSDLNAEDVEVDYIVLTHGHGDHFGDTVEIAKKNNATVVGLAEVADYLSTSQGVENVHPMNIGGKWEFEFGSVKYVQAFHSSSLTNEDGIPVYLGASTGLILEVDGKTIYHCGDTGLFSDMKLIADRHPVDICFVPIGDNFTMGIEDASYAINEFIQPKISVPIHYDTFPYIEQNPEDFKKLVNKGEVQILKPGEEVKFD</sequence>
<keyword id="KW-0378">Hydrolase</keyword>
<keyword id="KW-1185">Reference proteome</keyword>
<comment type="similarity">
    <text evidence="1">Belongs to the UPF0173 family.</text>
</comment>
<reference key="1">
    <citation type="journal article" date="2009" name="Appl. Environ. Microbiol.">
        <title>Genome analysis of the meat starter culture bacterium Staphylococcus carnosus TM300.</title>
        <authorList>
            <person name="Rosenstein R."/>
            <person name="Nerz C."/>
            <person name="Biswas L."/>
            <person name="Resch A."/>
            <person name="Raddatz G."/>
            <person name="Schuster S.C."/>
            <person name="Goetz F."/>
        </authorList>
    </citation>
    <scope>NUCLEOTIDE SEQUENCE [LARGE SCALE GENOMIC DNA]</scope>
    <source>
        <strain>TM300</strain>
    </source>
</reference>